<evidence type="ECO:0000255" key="1">
    <source>
        <dbReference type="HAMAP-Rule" id="MF_00049"/>
    </source>
</evidence>
<dbReference type="EC" id="6.1.1.4" evidence="1"/>
<dbReference type="EMBL" id="CP000478">
    <property type="protein sequence ID" value="ABK17767.1"/>
    <property type="molecule type" value="Genomic_DNA"/>
</dbReference>
<dbReference type="RefSeq" id="WP_011698936.1">
    <property type="nucleotide sequence ID" value="NC_008554.1"/>
</dbReference>
<dbReference type="SMR" id="A0LK15"/>
<dbReference type="FunCoup" id="A0LK15">
    <property type="interactions" value="585"/>
</dbReference>
<dbReference type="STRING" id="335543.Sfum_2084"/>
<dbReference type="KEGG" id="sfu:Sfum_2084"/>
<dbReference type="eggNOG" id="COG0495">
    <property type="taxonomic scope" value="Bacteria"/>
</dbReference>
<dbReference type="HOGENOM" id="CLU_004427_0_0_7"/>
<dbReference type="InParanoid" id="A0LK15"/>
<dbReference type="OrthoDB" id="9810365at2"/>
<dbReference type="Proteomes" id="UP000001784">
    <property type="component" value="Chromosome"/>
</dbReference>
<dbReference type="GO" id="GO:0005829">
    <property type="term" value="C:cytosol"/>
    <property type="evidence" value="ECO:0007669"/>
    <property type="project" value="TreeGrafter"/>
</dbReference>
<dbReference type="GO" id="GO:0002161">
    <property type="term" value="F:aminoacyl-tRNA deacylase activity"/>
    <property type="evidence" value="ECO:0007669"/>
    <property type="project" value="InterPro"/>
</dbReference>
<dbReference type="GO" id="GO:0005524">
    <property type="term" value="F:ATP binding"/>
    <property type="evidence" value="ECO:0007669"/>
    <property type="project" value="UniProtKB-UniRule"/>
</dbReference>
<dbReference type="GO" id="GO:0004823">
    <property type="term" value="F:leucine-tRNA ligase activity"/>
    <property type="evidence" value="ECO:0007669"/>
    <property type="project" value="UniProtKB-UniRule"/>
</dbReference>
<dbReference type="GO" id="GO:0006429">
    <property type="term" value="P:leucyl-tRNA aminoacylation"/>
    <property type="evidence" value="ECO:0007669"/>
    <property type="project" value="UniProtKB-UniRule"/>
</dbReference>
<dbReference type="CDD" id="cd07958">
    <property type="entry name" value="Anticodon_Ia_Leu_BEm"/>
    <property type="match status" value="1"/>
</dbReference>
<dbReference type="CDD" id="cd00812">
    <property type="entry name" value="LeuRS_core"/>
    <property type="match status" value="1"/>
</dbReference>
<dbReference type="FunFam" id="3.10.20.590:FF:000001">
    <property type="entry name" value="Leucine--tRNA ligase"/>
    <property type="match status" value="1"/>
</dbReference>
<dbReference type="FunFam" id="3.40.50.620:FF:000003">
    <property type="entry name" value="Leucine--tRNA ligase"/>
    <property type="match status" value="1"/>
</dbReference>
<dbReference type="FunFam" id="3.40.50.620:FF:000056">
    <property type="entry name" value="Leucine--tRNA ligase"/>
    <property type="match status" value="1"/>
</dbReference>
<dbReference type="FunFam" id="1.10.730.10:FF:000011">
    <property type="entry name" value="Leucine--tRNA ligase chloroplastic/mitochondrial"/>
    <property type="match status" value="1"/>
</dbReference>
<dbReference type="Gene3D" id="3.10.20.590">
    <property type="match status" value="1"/>
</dbReference>
<dbReference type="Gene3D" id="3.40.50.620">
    <property type="entry name" value="HUPs"/>
    <property type="match status" value="2"/>
</dbReference>
<dbReference type="Gene3D" id="1.10.730.10">
    <property type="entry name" value="Isoleucyl-tRNA Synthetase, Domain 1"/>
    <property type="match status" value="1"/>
</dbReference>
<dbReference type="HAMAP" id="MF_00049_B">
    <property type="entry name" value="Leu_tRNA_synth_B"/>
    <property type="match status" value="1"/>
</dbReference>
<dbReference type="InterPro" id="IPR001412">
    <property type="entry name" value="aa-tRNA-synth_I_CS"/>
</dbReference>
<dbReference type="InterPro" id="IPR002300">
    <property type="entry name" value="aa-tRNA-synth_Ia"/>
</dbReference>
<dbReference type="InterPro" id="IPR002302">
    <property type="entry name" value="Leu-tRNA-ligase"/>
</dbReference>
<dbReference type="InterPro" id="IPR025709">
    <property type="entry name" value="Leu_tRNA-synth_edit"/>
</dbReference>
<dbReference type="InterPro" id="IPR013155">
    <property type="entry name" value="M/V/L/I-tRNA-synth_anticd-bd"/>
</dbReference>
<dbReference type="InterPro" id="IPR015413">
    <property type="entry name" value="Methionyl/Leucyl_tRNA_Synth"/>
</dbReference>
<dbReference type="InterPro" id="IPR014729">
    <property type="entry name" value="Rossmann-like_a/b/a_fold"/>
</dbReference>
<dbReference type="InterPro" id="IPR009080">
    <property type="entry name" value="tRNAsynth_Ia_anticodon-bd"/>
</dbReference>
<dbReference type="InterPro" id="IPR009008">
    <property type="entry name" value="Val/Leu/Ile-tRNA-synth_edit"/>
</dbReference>
<dbReference type="NCBIfam" id="TIGR00396">
    <property type="entry name" value="leuS_bact"/>
    <property type="match status" value="1"/>
</dbReference>
<dbReference type="PANTHER" id="PTHR43740:SF2">
    <property type="entry name" value="LEUCINE--TRNA LIGASE, MITOCHONDRIAL"/>
    <property type="match status" value="1"/>
</dbReference>
<dbReference type="PANTHER" id="PTHR43740">
    <property type="entry name" value="LEUCYL-TRNA SYNTHETASE"/>
    <property type="match status" value="1"/>
</dbReference>
<dbReference type="Pfam" id="PF08264">
    <property type="entry name" value="Anticodon_1"/>
    <property type="match status" value="1"/>
</dbReference>
<dbReference type="Pfam" id="PF00133">
    <property type="entry name" value="tRNA-synt_1"/>
    <property type="match status" value="1"/>
</dbReference>
<dbReference type="Pfam" id="PF13603">
    <property type="entry name" value="tRNA-synt_1_2"/>
    <property type="match status" value="1"/>
</dbReference>
<dbReference type="Pfam" id="PF09334">
    <property type="entry name" value="tRNA-synt_1g"/>
    <property type="match status" value="1"/>
</dbReference>
<dbReference type="PRINTS" id="PR00985">
    <property type="entry name" value="TRNASYNTHLEU"/>
</dbReference>
<dbReference type="SUPFAM" id="SSF47323">
    <property type="entry name" value="Anticodon-binding domain of a subclass of class I aminoacyl-tRNA synthetases"/>
    <property type="match status" value="1"/>
</dbReference>
<dbReference type="SUPFAM" id="SSF52374">
    <property type="entry name" value="Nucleotidylyl transferase"/>
    <property type="match status" value="1"/>
</dbReference>
<dbReference type="SUPFAM" id="SSF50677">
    <property type="entry name" value="ValRS/IleRS/LeuRS editing domain"/>
    <property type="match status" value="1"/>
</dbReference>
<dbReference type="PROSITE" id="PS00178">
    <property type="entry name" value="AA_TRNA_LIGASE_I"/>
    <property type="match status" value="1"/>
</dbReference>
<proteinExistence type="inferred from homology"/>
<sequence length="829" mass="93354">MDYKYAPKRIEKKWQEHWEREKLFEVSEIPGREKFYLLEMFPYPSGRIHMGHVRNYSIGDVVARFLRMRGYNVLHPMGWDAFGMPAENAAIKAKTHPARWTYENIAYMRSQLKQLGFSYDWSREFATCDVSYYRWEQLFFLKMYEKGLAYKRSAYVNWCGTCLTVLANEQVEGGACWRCDQPVVQKEMEQWFFKITDYVEELLDYTHRLPGWPERVLTMQQNWIGKSLGSKLLFPLASGDGSITVFTTRADTLFGATFMSLAPEHPLVEGLCRGNPQESEVLRFVQAAKQAKRNDREAELLEKEGVFTGSCCINPVTGAKMPIYVANFVVMEYGTGAVMAVPAHDQRDFEFARKYGLPVKVVIKPADAAAAPAAQELSAAFEDDGVLVDSGAYSGMASAEARTAITADLAGKGLGEQTVQYRLRDWGISRQRYWGAPIPIVYCDKCGTVPVPEKDLPVVLPTDVALLPNGASPLPAHAPFLNTDCPRCGGPARRETDTMDTFVESSWYFARFACARYDQGPLDLPKVKYWMPVDQYIGGIEHAVLHLLYSRFFVKVLRDMGALEVDEPFRNLLTQGMVIKDGAKMSKSKGNVVDPDDMIKAYGADTVRLFCLFASPPEKDLEWSDQGVEGSFRFLSRIWRLVSDNLDALRSAPRHNGGGALPEPLEALHRKTHQTIKKVTEDIRDRFHFNTAIAAIMELVNQIYQVVEGGSRAGNIWPVVKEAVEALILLVSPMAPHIAEEIWHELGHTRSVLLEPWPEWSGKALQAEEVMLVVQVNGRLRSRITVPSDATPEQMEAAALADSRVQEFIAGKPVRKVVVVPKKIINVVV</sequence>
<organism>
    <name type="scientific">Syntrophobacter fumaroxidans (strain DSM 10017 / MPOB)</name>
    <dbReference type="NCBI Taxonomy" id="335543"/>
    <lineage>
        <taxon>Bacteria</taxon>
        <taxon>Pseudomonadati</taxon>
        <taxon>Thermodesulfobacteriota</taxon>
        <taxon>Syntrophobacteria</taxon>
        <taxon>Syntrophobacterales</taxon>
        <taxon>Syntrophobacteraceae</taxon>
        <taxon>Syntrophobacter</taxon>
    </lineage>
</organism>
<feature type="chain" id="PRO_1000009454" description="Leucine--tRNA ligase">
    <location>
        <begin position="1"/>
        <end position="829"/>
    </location>
</feature>
<feature type="short sequence motif" description="'HIGH' region">
    <location>
        <begin position="42"/>
        <end position="52"/>
    </location>
</feature>
<feature type="short sequence motif" description="'KMSKS' region">
    <location>
        <begin position="584"/>
        <end position="588"/>
    </location>
</feature>
<feature type="binding site" evidence="1">
    <location>
        <position position="587"/>
    </location>
    <ligand>
        <name>ATP</name>
        <dbReference type="ChEBI" id="CHEBI:30616"/>
    </ligand>
</feature>
<accession>A0LK15</accession>
<name>SYL_SYNFM</name>
<comment type="catalytic activity">
    <reaction evidence="1">
        <text>tRNA(Leu) + L-leucine + ATP = L-leucyl-tRNA(Leu) + AMP + diphosphate</text>
        <dbReference type="Rhea" id="RHEA:11688"/>
        <dbReference type="Rhea" id="RHEA-COMP:9613"/>
        <dbReference type="Rhea" id="RHEA-COMP:9622"/>
        <dbReference type="ChEBI" id="CHEBI:30616"/>
        <dbReference type="ChEBI" id="CHEBI:33019"/>
        <dbReference type="ChEBI" id="CHEBI:57427"/>
        <dbReference type="ChEBI" id="CHEBI:78442"/>
        <dbReference type="ChEBI" id="CHEBI:78494"/>
        <dbReference type="ChEBI" id="CHEBI:456215"/>
        <dbReference type="EC" id="6.1.1.4"/>
    </reaction>
</comment>
<comment type="subcellular location">
    <subcellularLocation>
        <location evidence="1">Cytoplasm</location>
    </subcellularLocation>
</comment>
<comment type="similarity">
    <text evidence="1">Belongs to the class-I aminoacyl-tRNA synthetase family.</text>
</comment>
<protein>
    <recommendedName>
        <fullName evidence="1">Leucine--tRNA ligase</fullName>
        <ecNumber evidence="1">6.1.1.4</ecNumber>
    </recommendedName>
    <alternativeName>
        <fullName evidence="1">Leucyl-tRNA synthetase</fullName>
        <shortName evidence="1">LeuRS</shortName>
    </alternativeName>
</protein>
<reference key="1">
    <citation type="submission" date="2006-10" db="EMBL/GenBank/DDBJ databases">
        <title>Complete sequence of Syntrophobacter fumaroxidans MPOB.</title>
        <authorList>
            <consortium name="US DOE Joint Genome Institute"/>
            <person name="Copeland A."/>
            <person name="Lucas S."/>
            <person name="Lapidus A."/>
            <person name="Barry K."/>
            <person name="Detter J.C."/>
            <person name="Glavina del Rio T."/>
            <person name="Hammon N."/>
            <person name="Israni S."/>
            <person name="Pitluck S."/>
            <person name="Goltsman E.G."/>
            <person name="Martinez M."/>
            <person name="Schmutz J."/>
            <person name="Larimer F."/>
            <person name="Land M."/>
            <person name="Hauser L."/>
            <person name="Kyrpides N."/>
            <person name="Kim E."/>
            <person name="Boone D.R."/>
            <person name="Brockman F."/>
            <person name="Culley D."/>
            <person name="Ferry J."/>
            <person name="Gunsalus R."/>
            <person name="McInerney M.J."/>
            <person name="Morrison M."/>
            <person name="Plugge C."/>
            <person name="Rohlin L."/>
            <person name="Scholten J."/>
            <person name="Sieber J."/>
            <person name="Stams A.J.M."/>
            <person name="Worm P."/>
            <person name="Henstra A.M."/>
            <person name="Richardson P."/>
        </authorList>
    </citation>
    <scope>NUCLEOTIDE SEQUENCE [LARGE SCALE GENOMIC DNA]</scope>
    <source>
        <strain>DSM 10017 / MPOB</strain>
    </source>
</reference>
<gene>
    <name evidence="1" type="primary">leuS</name>
    <name type="ordered locus">Sfum_2084</name>
</gene>
<keyword id="KW-0030">Aminoacyl-tRNA synthetase</keyword>
<keyword id="KW-0067">ATP-binding</keyword>
<keyword id="KW-0963">Cytoplasm</keyword>
<keyword id="KW-0436">Ligase</keyword>
<keyword id="KW-0547">Nucleotide-binding</keyword>
<keyword id="KW-0648">Protein biosynthesis</keyword>
<keyword id="KW-1185">Reference proteome</keyword>